<reference key="1">
    <citation type="journal article" date="2000" name="Cancer Res.">
        <title>Cloning and characterization of UROC28, a novel gene overexpressed in prostate, breast, and bladder cancers.</title>
        <authorList>
            <person name="An G."/>
            <person name="Ng A.Y."/>
            <person name="Meka C.S.R."/>
            <person name="Luo G."/>
            <person name="Bright S.P."/>
            <person name="Cazares L."/>
            <person name="Wright G.L. Jr."/>
            <person name="Veltri R.W."/>
        </authorList>
    </citation>
    <scope>NUCLEOTIDE SEQUENCE [MRNA]</scope>
    <scope>SUBCELLULAR LOCATION</scope>
    <scope>TISSUE SPECIFICITY</scope>
    <source>
        <tissue>Prostatic carcinoma</tissue>
    </source>
</reference>
<reference key="2">
    <citation type="journal article" date="2003" name="Nature">
        <title>The DNA sequence and analysis of human chromosome 6.</title>
        <authorList>
            <person name="Mungall A.J."/>
            <person name="Palmer S.A."/>
            <person name="Sims S.K."/>
            <person name="Edwards C.A."/>
            <person name="Ashurst J.L."/>
            <person name="Wilming L."/>
            <person name="Jones M.C."/>
            <person name="Horton R."/>
            <person name="Hunt S.E."/>
            <person name="Scott C.E."/>
            <person name="Gilbert J.G.R."/>
            <person name="Clamp M.E."/>
            <person name="Bethel G."/>
            <person name="Milne S."/>
            <person name="Ainscough R."/>
            <person name="Almeida J.P."/>
            <person name="Ambrose K.D."/>
            <person name="Andrews T.D."/>
            <person name="Ashwell R.I.S."/>
            <person name="Babbage A.K."/>
            <person name="Bagguley C.L."/>
            <person name="Bailey J."/>
            <person name="Banerjee R."/>
            <person name="Barker D.J."/>
            <person name="Barlow K.F."/>
            <person name="Bates K."/>
            <person name="Beare D.M."/>
            <person name="Beasley H."/>
            <person name="Beasley O."/>
            <person name="Bird C.P."/>
            <person name="Blakey S.E."/>
            <person name="Bray-Allen S."/>
            <person name="Brook J."/>
            <person name="Brown A.J."/>
            <person name="Brown J.Y."/>
            <person name="Burford D.C."/>
            <person name="Burrill W."/>
            <person name="Burton J."/>
            <person name="Carder C."/>
            <person name="Carter N.P."/>
            <person name="Chapman J.C."/>
            <person name="Clark S.Y."/>
            <person name="Clark G."/>
            <person name="Clee C.M."/>
            <person name="Clegg S."/>
            <person name="Cobley V."/>
            <person name="Collier R.E."/>
            <person name="Collins J.E."/>
            <person name="Colman L.K."/>
            <person name="Corby N.R."/>
            <person name="Coville G.J."/>
            <person name="Culley K.M."/>
            <person name="Dhami P."/>
            <person name="Davies J."/>
            <person name="Dunn M."/>
            <person name="Earthrowl M.E."/>
            <person name="Ellington A.E."/>
            <person name="Evans K.A."/>
            <person name="Faulkner L."/>
            <person name="Francis M.D."/>
            <person name="Frankish A."/>
            <person name="Frankland J."/>
            <person name="French L."/>
            <person name="Garner P."/>
            <person name="Garnett J."/>
            <person name="Ghori M.J."/>
            <person name="Gilby L.M."/>
            <person name="Gillson C.J."/>
            <person name="Glithero R.J."/>
            <person name="Grafham D.V."/>
            <person name="Grant M."/>
            <person name="Gribble S."/>
            <person name="Griffiths C."/>
            <person name="Griffiths M.N.D."/>
            <person name="Hall R."/>
            <person name="Halls K.S."/>
            <person name="Hammond S."/>
            <person name="Harley J.L."/>
            <person name="Hart E.A."/>
            <person name="Heath P.D."/>
            <person name="Heathcott R."/>
            <person name="Holmes S.J."/>
            <person name="Howden P.J."/>
            <person name="Howe K.L."/>
            <person name="Howell G.R."/>
            <person name="Huckle E."/>
            <person name="Humphray S.J."/>
            <person name="Humphries M.D."/>
            <person name="Hunt A.R."/>
            <person name="Johnson C.M."/>
            <person name="Joy A.A."/>
            <person name="Kay M."/>
            <person name="Keenan S.J."/>
            <person name="Kimberley A.M."/>
            <person name="King A."/>
            <person name="Laird G.K."/>
            <person name="Langford C."/>
            <person name="Lawlor S."/>
            <person name="Leongamornlert D.A."/>
            <person name="Leversha M."/>
            <person name="Lloyd C.R."/>
            <person name="Lloyd D.M."/>
            <person name="Loveland J.E."/>
            <person name="Lovell J."/>
            <person name="Martin S."/>
            <person name="Mashreghi-Mohammadi M."/>
            <person name="Maslen G.L."/>
            <person name="Matthews L."/>
            <person name="McCann O.T."/>
            <person name="McLaren S.J."/>
            <person name="McLay K."/>
            <person name="McMurray A."/>
            <person name="Moore M.J.F."/>
            <person name="Mullikin J.C."/>
            <person name="Niblett D."/>
            <person name="Nickerson T."/>
            <person name="Novik K.L."/>
            <person name="Oliver K."/>
            <person name="Overton-Larty E.K."/>
            <person name="Parker A."/>
            <person name="Patel R."/>
            <person name="Pearce A.V."/>
            <person name="Peck A.I."/>
            <person name="Phillimore B.J.C.T."/>
            <person name="Phillips S."/>
            <person name="Plumb R.W."/>
            <person name="Porter K.M."/>
            <person name="Ramsey Y."/>
            <person name="Ranby S.A."/>
            <person name="Rice C.M."/>
            <person name="Ross M.T."/>
            <person name="Searle S.M."/>
            <person name="Sehra H.K."/>
            <person name="Sheridan E."/>
            <person name="Skuce C.D."/>
            <person name="Smith S."/>
            <person name="Smith M."/>
            <person name="Spraggon L."/>
            <person name="Squares S.L."/>
            <person name="Steward C.A."/>
            <person name="Sycamore N."/>
            <person name="Tamlyn-Hall G."/>
            <person name="Tester J."/>
            <person name="Theaker A.J."/>
            <person name="Thomas D.W."/>
            <person name="Thorpe A."/>
            <person name="Tracey A."/>
            <person name="Tromans A."/>
            <person name="Tubby B."/>
            <person name="Wall M."/>
            <person name="Wallis J.M."/>
            <person name="West A.P."/>
            <person name="White S.S."/>
            <person name="Whitehead S.L."/>
            <person name="Whittaker H."/>
            <person name="Wild A."/>
            <person name="Willey D.J."/>
            <person name="Wilmer T.E."/>
            <person name="Wood J.M."/>
            <person name="Wray P.W."/>
            <person name="Wyatt J.C."/>
            <person name="Young L."/>
            <person name="Younger R.M."/>
            <person name="Bentley D.R."/>
            <person name="Coulson A."/>
            <person name="Durbin R.M."/>
            <person name="Hubbard T."/>
            <person name="Sulston J.E."/>
            <person name="Dunham I."/>
            <person name="Rogers J."/>
            <person name="Beck S."/>
        </authorList>
    </citation>
    <scope>NUCLEOTIDE SEQUENCE [LARGE SCALE GENOMIC DNA]</scope>
</reference>
<reference key="3">
    <citation type="journal article" date="2004" name="Genome Res.">
        <title>The status, quality, and expansion of the NIH full-length cDNA project: the Mammalian Gene Collection (MGC).</title>
        <authorList>
            <consortium name="The MGC Project Team"/>
        </authorList>
    </citation>
    <scope>NUCLEOTIDE SEQUENCE [LARGE SCALE MRNA]</scope>
</reference>
<sequence length="135" mass="15722">MRAFLRNQKYEDMHNIIHILQIRKLRHRLSNFPRLPGILAPETVLLPFCYKVFRKKEKVKRSQKATEFIDYSIEQSHHAILTPLQTHLTMKGSSMKCSSLSSEAILFTLTLQLTQTLGLECCLLYLSKTIHPQII</sequence>
<dbReference type="EMBL" id="AF189269">
    <property type="protein sequence ID" value="AAG17117.1"/>
    <property type="molecule type" value="mRNA"/>
</dbReference>
<dbReference type="EMBL" id="AF189270">
    <property type="protein sequence ID" value="AAG17118.1"/>
    <property type="molecule type" value="mRNA"/>
</dbReference>
<dbReference type="EMBL" id="AL031433">
    <property type="status" value="NOT_ANNOTATED_CDS"/>
    <property type="molecule type" value="Genomic_DNA"/>
</dbReference>
<dbReference type="EMBL" id="BC069109">
    <property type="protein sequence ID" value="AAH69109.1"/>
    <property type="molecule type" value="mRNA"/>
</dbReference>
<dbReference type="CCDS" id="CCDS5190.1"/>
<dbReference type="RefSeq" id="NP_067648.1">
    <property type="nucleotide sequence ID" value="NM_021635.3"/>
</dbReference>
<dbReference type="SMR" id="Q9GZY1"/>
<dbReference type="iPTMnet" id="Q9GZY1"/>
<dbReference type="BioMuta" id="PBOV1"/>
<dbReference type="PaxDb" id="9606-ENSP00000432353"/>
<dbReference type="Antibodypedia" id="59014">
    <property type="antibodies" value="109 antibodies from 19 providers"/>
</dbReference>
<dbReference type="DNASU" id="59351"/>
<dbReference type="Ensembl" id="ENST00000527246.3">
    <property type="protein sequence ID" value="ENSP00000432353.1"/>
    <property type="gene ID" value="ENSG00000254440.3"/>
</dbReference>
<dbReference type="GeneID" id="59351"/>
<dbReference type="KEGG" id="hsa:59351"/>
<dbReference type="MANE-Select" id="ENST00000527246.3">
    <property type="protein sequence ID" value="ENSP00000432353.1"/>
    <property type="RefSeq nucleotide sequence ID" value="NM_021635.3"/>
    <property type="RefSeq protein sequence ID" value="NP_067648.1"/>
</dbReference>
<dbReference type="UCSC" id="uc003qhv.5">
    <property type="organism name" value="human"/>
</dbReference>
<dbReference type="AGR" id="HGNC:21079"/>
<dbReference type="CTD" id="59351"/>
<dbReference type="DisGeNET" id="59351"/>
<dbReference type="GeneCards" id="PBOV1"/>
<dbReference type="HGNC" id="HGNC:21079">
    <property type="gene designation" value="PBOV1"/>
</dbReference>
<dbReference type="HPA" id="ENSG00000254440">
    <property type="expression patterns" value="Not detected"/>
</dbReference>
<dbReference type="MIM" id="605669">
    <property type="type" value="gene"/>
</dbReference>
<dbReference type="neXtProt" id="NX_Q9GZY1"/>
<dbReference type="OpenTargets" id="ENSG00000254440"/>
<dbReference type="PharmGKB" id="PA134869958"/>
<dbReference type="VEuPathDB" id="HostDB:ENSG00000254440"/>
<dbReference type="eggNOG" id="ENOG502TFC8">
    <property type="taxonomic scope" value="Eukaryota"/>
</dbReference>
<dbReference type="GeneTree" id="ENSGT00390000009242"/>
<dbReference type="HOGENOM" id="CLU_1885075_0_0_1"/>
<dbReference type="InParanoid" id="Q9GZY1"/>
<dbReference type="OMA" id="SHHAILT"/>
<dbReference type="OrthoDB" id="9539341at2759"/>
<dbReference type="PAN-GO" id="Q9GZY1">
    <property type="GO annotations" value="0 GO annotations based on evolutionary models"/>
</dbReference>
<dbReference type="PathwayCommons" id="Q9GZY1"/>
<dbReference type="SignaLink" id="Q9GZY1"/>
<dbReference type="BioGRID-ORCS" id="59351">
    <property type="hits" value="8 hits in 1060 CRISPR screens"/>
</dbReference>
<dbReference type="ChiTaRS" id="PBOV1">
    <property type="organism name" value="human"/>
</dbReference>
<dbReference type="GenomeRNAi" id="59351"/>
<dbReference type="Pharos" id="Q9GZY1">
    <property type="development level" value="Tbio"/>
</dbReference>
<dbReference type="PRO" id="PR:Q9GZY1"/>
<dbReference type="Proteomes" id="UP000005640">
    <property type="component" value="Chromosome 6"/>
</dbReference>
<dbReference type="RNAct" id="Q9GZY1">
    <property type="molecule type" value="protein"/>
</dbReference>
<dbReference type="Bgee" id="ENSG00000254440">
    <property type="expression patterns" value="Expressed in colonic epithelium and 10 other cell types or tissues"/>
</dbReference>
<dbReference type="GO" id="GO:0034451">
    <property type="term" value="C:centriolar satellite"/>
    <property type="evidence" value="ECO:0000314"/>
    <property type="project" value="HPA"/>
</dbReference>
<dbReference type="GO" id="GO:0005829">
    <property type="term" value="C:cytosol"/>
    <property type="evidence" value="ECO:0000314"/>
    <property type="project" value="HPA"/>
</dbReference>
<dbReference type="GO" id="GO:0005654">
    <property type="term" value="C:nucleoplasm"/>
    <property type="evidence" value="ECO:0000314"/>
    <property type="project" value="HPA"/>
</dbReference>
<proteinExistence type="evidence at transcript level"/>
<gene>
    <name type="primary">PBOV1</name>
    <name type="synonym">UROC28</name>
</gene>
<organism>
    <name type="scientific">Homo sapiens</name>
    <name type="common">Human</name>
    <dbReference type="NCBI Taxonomy" id="9606"/>
    <lineage>
        <taxon>Eukaryota</taxon>
        <taxon>Metazoa</taxon>
        <taxon>Chordata</taxon>
        <taxon>Craniata</taxon>
        <taxon>Vertebrata</taxon>
        <taxon>Euteleostomi</taxon>
        <taxon>Mammalia</taxon>
        <taxon>Eutheria</taxon>
        <taxon>Euarchontoglires</taxon>
        <taxon>Primates</taxon>
        <taxon>Haplorrhini</taxon>
        <taxon>Catarrhini</taxon>
        <taxon>Hominidae</taxon>
        <taxon>Homo</taxon>
    </lineage>
</organism>
<comment type="subcellular location">
    <subcellularLocation>
        <location evidence="1">Cytoplasm</location>
    </subcellularLocation>
    <subcellularLocation>
        <location evidence="1">Nucleus</location>
    </subcellularLocation>
</comment>
<comment type="tissue specificity">
    <text evidence="1">Expressed in colon, prostate, small intestine, testis and spleen, with lower expression in thymus, ovary, and peripheral blood leukocytes. Up-regulated expression in prostate, breast, and bladder cancer, but not in lung and colon cancer.</text>
</comment>
<feature type="chain" id="PRO_0000076285" description="Prostate and breast cancer overexpressed gene 1 protein">
    <location>
        <begin position="1"/>
        <end position="135"/>
    </location>
</feature>
<feature type="sequence variant" id="VAR_059707" description="In dbSNP:rs6927706.">
    <original>I</original>
    <variation>T</variation>
    <location>
        <position position="73"/>
    </location>
</feature>
<evidence type="ECO:0000269" key="1">
    <source>
    </source>
</evidence>
<protein>
    <recommendedName>
        <fullName>Prostate and breast cancer overexpressed gene 1 protein</fullName>
    </recommendedName>
    <alternativeName>
        <fullName>Protein UROC28</fullName>
        <shortName>UC28</shortName>
    </alternativeName>
</protein>
<keyword id="KW-0963">Cytoplasm</keyword>
<keyword id="KW-0539">Nucleus</keyword>
<keyword id="KW-1185">Reference proteome</keyword>
<name>PBOV1_HUMAN</name>
<accession>Q9GZY1</accession>